<feature type="signal peptide" evidence="2">
    <location>
        <begin position="1"/>
        <end position="26"/>
    </location>
</feature>
<feature type="chain" id="PRO_0000393548" description="Probable 1,4-beta-D-glucan cellobiohydrolase B">
    <location>
        <begin position="27"/>
        <end position="532"/>
    </location>
</feature>
<feature type="domain" description="CBM1" evidence="3">
    <location>
        <begin position="496"/>
        <end position="532"/>
    </location>
</feature>
<feature type="region of interest" description="Catalytic">
    <location>
        <begin position="27"/>
        <end position="461"/>
    </location>
</feature>
<feature type="region of interest" description="Thr-rich linker">
    <location>
        <begin position="462"/>
        <end position="496"/>
    </location>
</feature>
<feature type="region of interest" description="Disordered" evidence="4">
    <location>
        <begin position="462"/>
        <end position="495"/>
    </location>
</feature>
<feature type="compositionally biased region" description="Low complexity" evidence="4">
    <location>
        <begin position="475"/>
        <end position="490"/>
    </location>
</feature>
<feature type="active site" description="Nucleophile" evidence="1">
    <location>
        <position position="238"/>
    </location>
</feature>
<feature type="active site" description="Proton donor" evidence="1">
    <location>
        <position position="243"/>
    </location>
</feature>
<feature type="glycosylation site" description="N-linked (GlcNAc...) asparagine" evidence="2">
    <location>
        <position position="296"/>
    </location>
</feature>
<feature type="disulfide bond" evidence="1">
    <location>
        <begin position="504"/>
        <end position="521"/>
    </location>
</feature>
<feature type="disulfide bond" evidence="1">
    <location>
        <begin position="515"/>
        <end position="531"/>
    </location>
</feature>
<feature type="strand" evidence="7">
    <location>
        <begin position="42"/>
        <end position="45"/>
    </location>
</feature>
<feature type="strand" evidence="7">
    <location>
        <begin position="51"/>
        <end position="54"/>
    </location>
</feature>
<feature type="strand" evidence="7">
    <location>
        <begin position="57"/>
        <end position="60"/>
    </location>
</feature>
<feature type="helix" evidence="7">
    <location>
        <begin position="62"/>
        <end position="64"/>
    </location>
</feature>
<feature type="strand" evidence="7">
    <location>
        <begin position="67"/>
        <end position="69"/>
    </location>
</feature>
<feature type="strand" evidence="7">
    <location>
        <begin position="75"/>
        <end position="78"/>
    </location>
</feature>
<feature type="turn" evidence="7">
    <location>
        <begin position="84"/>
        <end position="86"/>
    </location>
</feature>
<feature type="helix" evidence="7">
    <location>
        <begin position="90"/>
        <end position="96"/>
    </location>
</feature>
<feature type="strand" evidence="7">
    <location>
        <begin position="97"/>
        <end position="99"/>
    </location>
</feature>
<feature type="helix" evidence="7">
    <location>
        <begin position="104"/>
        <end position="108"/>
    </location>
</feature>
<feature type="strand" evidence="7">
    <location>
        <begin position="110"/>
        <end position="113"/>
    </location>
</feature>
<feature type="strand" evidence="7">
    <location>
        <begin position="116"/>
        <end position="130"/>
    </location>
</feature>
<feature type="strand" evidence="7">
    <location>
        <begin position="132"/>
        <end position="139"/>
    </location>
</feature>
<feature type="strand" evidence="7">
    <location>
        <begin position="151"/>
        <end position="158"/>
    </location>
</feature>
<feature type="strand" evidence="7">
    <location>
        <begin position="166"/>
        <end position="173"/>
    </location>
</feature>
<feature type="turn" evidence="7">
    <location>
        <begin position="177"/>
        <end position="183"/>
    </location>
</feature>
<feature type="helix" evidence="7">
    <location>
        <begin position="190"/>
        <end position="193"/>
    </location>
</feature>
<feature type="strand" evidence="7">
    <location>
        <begin position="207"/>
        <end position="209"/>
    </location>
</feature>
<feature type="strand" evidence="7">
    <location>
        <begin position="231"/>
        <end position="235"/>
    </location>
</feature>
<feature type="strand" evidence="7">
    <location>
        <begin position="238"/>
        <end position="244"/>
    </location>
</feature>
<feature type="strand" evidence="7">
    <location>
        <begin position="249"/>
        <end position="254"/>
    </location>
</feature>
<feature type="strand" evidence="7">
    <location>
        <begin position="256"/>
        <end position="260"/>
    </location>
</feature>
<feature type="strand" evidence="7">
    <location>
        <begin position="262"/>
        <end position="265"/>
    </location>
</feature>
<feature type="helix" evidence="7">
    <location>
        <begin position="266"/>
        <end position="269"/>
    </location>
</feature>
<feature type="strand" evidence="7">
    <location>
        <begin position="279"/>
        <end position="282"/>
    </location>
</feature>
<feature type="turn" evidence="7">
    <location>
        <begin position="291"/>
        <end position="295"/>
    </location>
</feature>
<feature type="strand" evidence="7">
    <location>
        <begin position="299"/>
        <end position="301"/>
    </location>
</feature>
<feature type="strand" evidence="7">
    <location>
        <begin position="304"/>
        <end position="307"/>
    </location>
</feature>
<feature type="strand" evidence="7">
    <location>
        <begin position="312"/>
        <end position="320"/>
    </location>
</feature>
<feature type="strand" evidence="7">
    <location>
        <begin position="329"/>
        <end position="338"/>
    </location>
</feature>
<feature type="strand" evidence="7">
    <location>
        <begin position="341"/>
        <end position="344"/>
    </location>
</feature>
<feature type="strand" evidence="7">
    <location>
        <begin position="356"/>
        <end position="358"/>
    </location>
</feature>
<feature type="helix" evidence="7">
    <location>
        <begin position="360"/>
        <end position="370"/>
    </location>
</feature>
<feature type="helix" evidence="7">
    <location>
        <begin position="375"/>
        <end position="378"/>
    </location>
</feature>
<feature type="helix" evidence="7">
    <location>
        <begin position="381"/>
        <end position="391"/>
    </location>
</feature>
<feature type="strand" evidence="7">
    <location>
        <begin position="393"/>
        <end position="401"/>
    </location>
</feature>
<feature type="turn" evidence="7">
    <location>
        <begin position="403"/>
        <end position="407"/>
    </location>
</feature>
<feature type="helix" evidence="7">
    <location>
        <begin position="408"/>
        <end position="411"/>
    </location>
</feature>
<feature type="strand" evidence="7">
    <location>
        <begin position="412"/>
        <end position="415"/>
    </location>
</feature>
<feature type="turn" evidence="7">
    <location>
        <begin position="423"/>
        <end position="425"/>
    </location>
</feature>
<feature type="helix" evidence="7">
    <location>
        <begin position="437"/>
        <end position="443"/>
    </location>
</feature>
<feature type="strand" evidence="7">
    <location>
        <begin position="448"/>
        <end position="458"/>
    </location>
</feature>
<feature type="turn" evidence="7">
    <location>
        <begin position="459"/>
        <end position="464"/>
    </location>
</feature>
<proteinExistence type="evidence at protein level"/>
<sequence length="532" mass="56457">MLASTFSYRMYKTALILAALLGSGQAQQVGTSQAEVHPSMTWQSCTAGGSCTTNNGKVVIDANWRWVHKVGDYTNCYTGNTWDTTICPDDATCASNCALEGANYESTYGVTASGNSLRLNFVTTSQQKNIGSRLYMMKDDSTYEMFKLLNQEFTFDVDVSNLPCGLNGALYFVAMDADGGMSKYPTNKAGAKYGTGYCDSQCPRDLKFINGQANVEGWQPSSNDANAGTGNHGSCCAEMDIWEANSISTAFTPHPCDTPGQVMCTGDACGGTYSSDRYGGTCDPDGCDFNSFRQGNKTFYGPGMTVDTKSKFTVVTQFITDDGTSSGTLKEIKRFYVQNGKVIPNSESTWTGVSGNSITTEYCTAQKSLFQDQNVFEKHGGLEGMGAALAQGMVLVMSLWDDHSANMLWLDSNYPTTASSTTPGVARGTCDISSGVPADVEANHPDAYVVYSNIKVGPIGSTFNSGGSNPGGGTTTTTTTQPTTTTTTAGNPGGTGVAQHYGQCGGIGWTGPTTCASPYTCQKLNDYYSQCL</sequence>
<name>CBHB_ASPFU</name>
<gene>
    <name type="primary">cbhB</name>
    <name type="ORF">AFUA_6G11610</name>
</gene>
<protein>
    <recommendedName>
        <fullName>Probable 1,4-beta-D-glucan cellobiohydrolase B</fullName>
        <ecNumber>3.2.1.91</ecNumber>
    </recommendedName>
    <alternativeName>
        <fullName>Beta-glucancellobiohydrolase B</fullName>
    </alternativeName>
    <alternativeName>
        <fullName>Exocellobiohydrolase B</fullName>
    </alternativeName>
    <alternativeName>
        <fullName>Exoglucanase B</fullName>
    </alternativeName>
</protein>
<comment type="function">
    <text evidence="1">The biological conversion of cellulose to glucose generally requires three types of hydrolytic enzymes: (1) Endoglucanases which cut internal beta-1,4-glucosidic bonds; (2) Exocellobiohydrolases that cut the disaccharide cellobiose from the non-reducing end of the cellulose polymer chain; (3) Beta-1,4-glucosidases which hydrolyze the cellobiose and other short cello-oligosaccharides to glucose.</text>
</comment>
<comment type="catalytic activity">
    <reaction>
        <text>Hydrolysis of (1-&gt;4)-beta-D-glucosidic linkages in cellulose and cellotetraose, releasing cellobiose from the non-reducing ends of the chains.</text>
        <dbReference type="EC" id="3.2.1.91"/>
    </reaction>
</comment>
<comment type="subcellular location">
    <subcellularLocation>
        <location evidence="6">Secreted</location>
    </subcellularLocation>
</comment>
<comment type="induction">
    <text evidence="5">Expressed at high levels in the presence of carboxymethylcellulose and repressed in the presence of glucose.</text>
</comment>
<comment type="similarity">
    <text evidence="6">Belongs to the glycosyl hydrolase 7 (cellulase C) family.</text>
</comment>
<evidence type="ECO:0000250" key="1"/>
<evidence type="ECO:0000255" key="2"/>
<evidence type="ECO:0000255" key="3">
    <source>
        <dbReference type="PROSITE-ProRule" id="PRU00597"/>
    </source>
</evidence>
<evidence type="ECO:0000256" key="4">
    <source>
        <dbReference type="SAM" id="MobiDB-lite"/>
    </source>
</evidence>
<evidence type="ECO:0000269" key="5">
    <source>
    </source>
</evidence>
<evidence type="ECO:0000305" key="6"/>
<evidence type="ECO:0007829" key="7">
    <source>
        <dbReference type="PDB" id="4V20"/>
    </source>
</evidence>
<organism>
    <name type="scientific">Aspergillus fumigatus (strain ATCC MYA-4609 / CBS 101355 / FGSC A1100 / Af293)</name>
    <name type="common">Neosartorya fumigata</name>
    <dbReference type="NCBI Taxonomy" id="330879"/>
    <lineage>
        <taxon>Eukaryota</taxon>
        <taxon>Fungi</taxon>
        <taxon>Dikarya</taxon>
        <taxon>Ascomycota</taxon>
        <taxon>Pezizomycotina</taxon>
        <taxon>Eurotiomycetes</taxon>
        <taxon>Eurotiomycetidae</taxon>
        <taxon>Eurotiales</taxon>
        <taxon>Aspergillaceae</taxon>
        <taxon>Aspergillus</taxon>
        <taxon>Aspergillus subgen. Fumigati</taxon>
    </lineage>
</organism>
<reference key="1">
    <citation type="journal article" date="2005" name="Nature">
        <title>Genomic sequence of the pathogenic and allergenic filamentous fungus Aspergillus fumigatus.</title>
        <authorList>
            <person name="Nierman W.C."/>
            <person name="Pain A."/>
            <person name="Anderson M.J."/>
            <person name="Wortman J.R."/>
            <person name="Kim H.S."/>
            <person name="Arroyo J."/>
            <person name="Berriman M."/>
            <person name="Abe K."/>
            <person name="Archer D.B."/>
            <person name="Bermejo C."/>
            <person name="Bennett J.W."/>
            <person name="Bowyer P."/>
            <person name="Chen D."/>
            <person name="Collins M."/>
            <person name="Coulsen R."/>
            <person name="Davies R."/>
            <person name="Dyer P.S."/>
            <person name="Farman M.L."/>
            <person name="Fedorova N."/>
            <person name="Fedorova N.D."/>
            <person name="Feldblyum T.V."/>
            <person name="Fischer R."/>
            <person name="Fosker N."/>
            <person name="Fraser A."/>
            <person name="Garcia J.L."/>
            <person name="Garcia M.J."/>
            <person name="Goble A."/>
            <person name="Goldman G.H."/>
            <person name="Gomi K."/>
            <person name="Griffith-Jones S."/>
            <person name="Gwilliam R."/>
            <person name="Haas B.J."/>
            <person name="Haas H."/>
            <person name="Harris D.E."/>
            <person name="Horiuchi H."/>
            <person name="Huang J."/>
            <person name="Humphray S."/>
            <person name="Jimenez J."/>
            <person name="Keller N."/>
            <person name="Khouri H."/>
            <person name="Kitamoto K."/>
            <person name="Kobayashi T."/>
            <person name="Konzack S."/>
            <person name="Kulkarni R."/>
            <person name="Kumagai T."/>
            <person name="Lafton A."/>
            <person name="Latge J.-P."/>
            <person name="Li W."/>
            <person name="Lord A."/>
            <person name="Lu C."/>
            <person name="Majoros W.H."/>
            <person name="May G.S."/>
            <person name="Miller B.L."/>
            <person name="Mohamoud Y."/>
            <person name="Molina M."/>
            <person name="Monod M."/>
            <person name="Mouyna I."/>
            <person name="Mulligan S."/>
            <person name="Murphy L.D."/>
            <person name="O'Neil S."/>
            <person name="Paulsen I."/>
            <person name="Penalva M.A."/>
            <person name="Pertea M."/>
            <person name="Price C."/>
            <person name="Pritchard B.L."/>
            <person name="Quail M.A."/>
            <person name="Rabbinowitsch E."/>
            <person name="Rawlins N."/>
            <person name="Rajandream M.A."/>
            <person name="Reichard U."/>
            <person name="Renauld H."/>
            <person name="Robson G.D."/>
            <person name="Rodriguez de Cordoba S."/>
            <person name="Rodriguez-Pena J.M."/>
            <person name="Ronning C.M."/>
            <person name="Rutter S."/>
            <person name="Salzberg S.L."/>
            <person name="Sanchez M."/>
            <person name="Sanchez-Ferrero J.C."/>
            <person name="Saunders D."/>
            <person name="Seeger K."/>
            <person name="Squares R."/>
            <person name="Squares S."/>
            <person name="Takeuchi M."/>
            <person name="Tekaia F."/>
            <person name="Turner G."/>
            <person name="Vazquez de Aldana C.R."/>
            <person name="Weidman J."/>
            <person name="White O."/>
            <person name="Woodward J.R."/>
            <person name="Yu J.-H."/>
            <person name="Fraser C.M."/>
            <person name="Galagan J.E."/>
            <person name="Asai K."/>
            <person name="Machida M."/>
            <person name="Hall N."/>
            <person name="Barrell B.G."/>
            <person name="Denning D.W."/>
        </authorList>
    </citation>
    <scope>NUCLEOTIDE SEQUENCE [LARGE SCALE GENOMIC DNA]</scope>
    <source>
        <strain>ATCC MYA-4609 / CBS 101355 / FGSC A1100 / Af293</strain>
    </source>
</reference>
<reference key="2">
    <citation type="journal article" date="2006" name="FEMS Microbiol. Lett.">
        <title>The Aspergillus fumigatus cellobiohydrolase B (cbhB) promoter is tightly regulated and can be exploited for controlled protein expression and RNAi.</title>
        <authorList>
            <person name="Bromley M."/>
            <person name="Gordon C."/>
            <person name="Rovira-Graells N."/>
            <person name="Oliver J."/>
        </authorList>
    </citation>
    <scope>INDUCTION</scope>
</reference>
<accession>Q4WM08</accession>
<keyword id="KW-0002">3D-structure</keyword>
<keyword id="KW-0119">Carbohydrate metabolism</keyword>
<keyword id="KW-0136">Cellulose degradation</keyword>
<keyword id="KW-1015">Disulfide bond</keyword>
<keyword id="KW-0325">Glycoprotein</keyword>
<keyword id="KW-0326">Glycosidase</keyword>
<keyword id="KW-0378">Hydrolase</keyword>
<keyword id="KW-0624">Polysaccharide degradation</keyword>
<keyword id="KW-1185">Reference proteome</keyword>
<keyword id="KW-0964">Secreted</keyword>
<keyword id="KW-0732">Signal</keyword>
<dbReference type="EC" id="3.2.1.91"/>
<dbReference type="EMBL" id="AAHF01000006">
    <property type="protein sequence ID" value="EAL89006.1"/>
    <property type="molecule type" value="Genomic_DNA"/>
</dbReference>
<dbReference type="RefSeq" id="XP_751044.1">
    <property type="nucleotide sequence ID" value="XM_745951.1"/>
</dbReference>
<dbReference type="PDB" id="4V1Z">
    <property type="method" value="X-ray"/>
    <property type="resolution" value="1.78 A"/>
    <property type="chains" value="A=28-466"/>
</dbReference>
<dbReference type="PDB" id="4V20">
    <property type="method" value="X-ray"/>
    <property type="resolution" value="1.50 A"/>
    <property type="chains" value="A=28-466"/>
</dbReference>
<dbReference type="PDBsum" id="4V1Z"/>
<dbReference type="PDBsum" id="4V20"/>
<dbReference type="SMR" id="Q4WM08"/>
<dbReference type="STRING" id="330879.Q4WM08"/>
<dbReference type="CAZy" id="CBM1">
    <property type="family name" value="Carbohydrate-Binding Module Family 1"/>
</dbReference>
<dbReference type="CAZy" id="GH7">
    <property type="family name" value="Glycoside Hydrolase Family 7"/>
</dbReference>
<dbReference type="GlyCosmos" id="Q4WM08">
    <property type="glycosylation" value="1 site, No reported glycans"/>
</dbReference>
<dbReference type="EnsemblFungi" id="EAL89006">
    <property type="protein sequence ID" value="EAL89006"/>
    <property type="gene ID" value="AFUA_6G11610"/>
</dbReference>
<dbReference type="GeneID" id="3508349"/>
<dbReference type="KEGG" id="afm:AFUA_6G11610"/>
<dbReference type="VEuPathDB" id="FungiDB:Afu6g11610"/>
<dbReference type="eggNOG" id="ENOG502QPHV">
    <property type="taxonomic scope" value="Eukaryota"/>
</dbReference>
<dbReference type="HOGENOM" id="CLU_020817_3_2_1"/>
<dbReference type="InParanoid" id="Q4WM08"/>
<dbReference type="OMA" id="CGFNGAL"/>
<dbReference type="OrthoDB" id="412382at2759"/>
<dbReference type="EvolutionaryTrace" id="Q4WM08"/>
<dbReference type="Proteomes" id="UP000002530">
    <property type="component" value="Chromosome 6"/>
</dbReference>
<dbReference type="GO" id="GO:0005576">
    <property type="term" value="C:extracellular region"/>
    <property type="evidence" value="ECO:0007669"/>
    <property type="project" value="UniProtKB-SubCell"/>
</dbReference>
<dbReference type="GO" id="GO:0016162">
    <property type="term" value="F:cellulose 1,4-beta-cellobiosidase activity"/>
    <property type="evidence" value="ECO:0000318"/>
    <property type="project" value="GO_Central"/>
</dbReference>
<dbReference type="GO" id="GO:0030248">
    <property type="term" value="F:cellulose binding"/>
    <property type="evidence" value="ECO:0007669"/>
    <property type="project" value="InterPro"/>
</dbReference>
<dbReference type="GO" id="GO:0030245">
    <property type="term" value="P:cellulose catabolic process"/>
    <property type="evidence" value="ECO:0007669"/>
    <property type="project" value="UniProtKB-KW"/>
</dbReference>
<dbReference type="GO" id="GO:0009251">
    <property type="term" value="P:glucan catabolic process"/>
    <property type="evidence" value="ECO:0000318"/>
    <property type="project" value="GO_Central"/>
</dbReference>
<dbReference type="CDD" id="cd07999">
    <property type="entry name" value="GH7_CBH_EG"/>
    <property type="match status" value="1"/>
</dbReference>
<dbReference type="FunFam" id="2.70.100.10:FF:000001">
    <property type="entry name" value="Glucanase"/>
    <property type="match status" value="1"/>
</dbReference>
<dbReference type="Gene3D" id="2.70.100.10">
    <property type="entry name" value="Glycoside hydrolase, family 7, domain"/>
    <property type="match status" value="1"/>
</dbReference>
<dbReference type="InterPro" id="IPR035971">
    <property type="entry name" value="CBD_sf"/>
</dbReference>
<dbReference type="InterPro" id="IPR000254">
    <property type="entry name" value="Cellulose-bd_dom_fun"/>
</dbReference>
<dbReference type="InterPro" id="IPR013320">
    <property type="entry name" value="ConA-like_dom_sf"/>
</dbReference>
<dbReference type="InterPro" id="IPR001722">
    <property type="entry name" value="Glyco_hydro_7"/>
</dbReference>
<dbReference type="InterPro" id="IPR037019">
    <property type="entry name" value="Glyco_hydro_7_sf"/>
</dbReference>
<dbReference type="PANTHER" id="PTHR33753">
    <property type="entry name" value="1,4-BETA-D-GLUCAN CELLOBIOHYDROLASE B"/>
    <property type="match status" value="1"/>
</dbReference>
<dbReference type="PANTHER" id="PTHR33753:SF2">
    <property type="entry name" value="GLYCOSIDE HYDROLASE FAMILY 7 PROTEIN"/>
    <property type="match status" value="1"/>
</dbReference>
<dbReference type="Pfam" id="PF00734">
    <property type="entry name" value="CBM_1"/>
    <property type="match status" value="1"/>
</dbReference>
<dbReference type="Pfam" id="PF00840">
    <property type="entry name" value="Glyco_hydro_7"/>
    <property type="match status" value="1"/>
</dbReference>
<dbReference type="PRINTS" id="PR00734">
    <property type="entry name" value="GLHYDRLASE7"/>
</dbReference>
<dbReference type="SMART" id="SM00236">
    <property type="entry name" value="fCBD"/>
    <property type="match status" value="1"/>
</dbReference>
<dbReference type="SUPFAM" id="SSF57180">
    <property type="entry name" value="Cellulose-binding domain"/>
    <property type="match status" value="1"/>
</dbReference>
<dbReference type="SUPFAM" id="SSF49899">
    <property type="entry name" value="Concanavalin A-like lectins/glucanases"/>
    <property type="match status" value="1"/>
</dbReference>
<dbReference type="PROSITE" id="PS00562">
    <property type="entry name" value="CBM1_1"/>
    <property type="match status" value="1"/>
</dbReference>
<dbReference type="PROSITE" id="PS51164">
    <property type="entry name" value="CBM1_2"/>
    <property type="match status" value="1"/>
</dbReference>